<comment type="function">
    <text evidence="1">Catalyzes the formation of the alpha-1,6-glucosidic linkages in glycogen by scission of a 1,4-alpha-linked oligosaccharide from growing alpha-1,4-glucan chains and the subsequent attachment of the oligosaccharide to the alpha-1,6 position.</text>
</comment>
<comment type="catalytic activity">
    <reaction evidence="1">
        <text>Transfers a segment of a (1-&gt;4)-alpha-D-glucan chain to a primary hydroxy group in a similar glucan chain.</text>
        <dbReference type="EC" id="2.4.1.18"/>
    </reaction>
</comment>
<comment type="pathway">
    <text evidence="1">Glycan biosynthesis; glycogen biosynthesis.</text>
</comment>
<comment type="subunit">
    <text evidence="1">Monomer.</text>
</comment>
<comment type="similarity">
    <text evidence="1">Belongs to the glycosyl hydrolase 13 family. GlgB subfamily.</text>
</comment>
<name>GLGB_NITEC</name>
<dbReference type="EC" id="2.4.1.18" evidence="1"/>
<dbReference type="EMBL" id="CP000450">
    <property type="protein sequence ID" value="ABI59542.1"/>
    <property type="molecule type" value="Genomic_DNA"/>
</dbReference>
<dbReference type="SMR" id="Q0AGJ0"/>
<dbReference type="STRING" id="335283.Neut_1291"/>
<dbReference type="CAZy" id="CBM48">
    <property type="family name" value="Carbohydrate-Binding Module Family 48"/>
</dbReference>
<dbReference type="CAZy" id="GH13">
    <property type="family name" value="Glycoside Hydrolase Family 13"/>
</dbReference>
<dbReference type="KEGG" id="net:Neut_1291"/>
<dbReference type="eggNOG" id="COG0296">
    <property type="taxonomic scope" value="Bacteria"/>
</dbReference>
<dbReference type="HOGENOM" id="CLU_004245_3_2_4"/>
<dbReference type="OrthoDB" id="9800174at2"/>
<dbReference type="UniPathway" id="UPA00164"/>
<dbReference type="Proteomes" id="UP000001966">
    <property type="component" value="Chromosome"/>
</dbReference>
<dbReference type="GO" id="GO:0005829">
    <property type="term" value="C:cytosol"/>
    <property type="evidence" value="ECO:0007669"/>
    <property type="project" value="TreeGrafter"/>
</dbReference>
<dbReference type="GO" id="GO:0003844">
    <property type="term" value="F:1,4-alpha-glucan branching enzyme activity"/>
    <property type="evidence" value="ECO:0007669"/>
    <property type="project" value="UniProtKB-UniRule"/>
</dbReference>
<dbReference type="GO" id="GO:0043169">
    <property type="term" value="F:cation binding"/>
    <property type="evidence" value="ECO:0007669"/>
    <property type="project" value="InterPro"/>
</dbReference>
<dbReference type="GO" id="GO:0004553">
    <property type="term" value="F:hydrolase activity, hydrolyzing O-glycosyl compounds"/>
    <property type="evidence" value="ECO:0007669"/>
    <property type="project" value="InterPro"/>
</dbReference>
<dbReference type="GO" id="GO:0005978">
    <property type="term" value="P:glycogen biosynthetic process"/>
    <property type="evidence" value="ECO:0007669"/>
    <property type="project" value="UniProtKB-UniRule"/>
</dbReference>
<dbReference type="CDD" id="cd11322">
    <property type="entry name" value="AmyAc_Glg_BE"/>
    <property type="match status" value="1"/>
</dbReference>
<dbReference type="CDD" id="cd02855">
    <property type="entry name" value="E_set_GBE_prok_N"/>
    <property type="match status" value="1"/>
</dbReference>
<dbReference type="FunFam" id="2.60.40.10:FF:000169">
    <property type="entry name" value="1,4-alpha-glucan branching enzyme GlgB"/>
    <property type="match status" value="1"/>
</dbReference>
<dbReference type="FunFam" id="2.60.40.1180:FF:000002">
    <property type="entry name" value="1,4-alpha-glucan branching enzyme GlgB"/>
    <property type="match status" value="1"/>
</dbReference>
<dbReference type="FunFam" id="3.20.20.80:FF:000003">
    <property type="entry name" value="1,4-alpha-glucan branching enzyme GlgB"/>
    <property type="match status" value="1"/>
</dbReference>
<dbReference type="Gene3D" id="3.20.20.80">
    <property type="entry name" value="Glycosidases"/>
    <property type="match status" value="1"/>
</dbReference>
<dbReference type="Gene3D" id="2.60.40.1180">
    <property type="entry name" value="Golgi alpha-mannosidase II"/>
    <property type="match status" value="1"/>
</dbReference>
<dbReference type="Gene3D" id="2.60.40.10">
    <property type="entry name" value="Immunoglobulins"/>
    <property type="match status" value="1"/>
</dbReference>
<dbReference type="HAMAP" id="MF_00685">
    <property type="entry name" value="GlgB"/>
    <property type="match status" value="1"/>
</dbReference>
<dbReference type="InterPro" id="IPR006048">
    <property type="entry name" value="A-amylase/branching_C"/>
</dbReference>
<dbReference type="InterPro" id="IPR037439">
    <property type="entry name" value="Branching_enzy"/>
</dbReference>
<dbReference type="InterPro" id="IPR006407">
    <property type="entry name" value="GlgB"/>
</dbReference>
<dbReference type="InterPro" id="IPR054169">
    <property type="entry name" value="GlgB_N"/>
</dbReference>
<dbReference type="InterPro" id="IPR044143">
    <property type="entry name" value="GlgB_N_E_set_prok"/>
</dbReference>
<dbReference type="InterPro" id="IPR006047">
    <property type="entry name" value="Glyco_hydro_13_cat_dom"/>
</dbReference>
<dbReference type="InterPro" id="IPR004193">
    <property type="entry name" value="Glyco_hydro_13_N"/>
</dbReference>
<dbReference type="InterPro" id="IPR013780">
    <property type="entry name" value="Glyco_hydro_b"/>
</dbReference>
<dbReference type="InterPro" id="IPR017853">
    <property type="entry name" value="Glycoside_hydrolase_SF"/>
</dbReference>
<dbReference type="InterPro" id="IPR013783">
    <property type="entry name" value="Ig-like_fold"/>
</dbReference>
<dbReference type="InterPro" id="IPR014756">
    <property type="entry name" value="Ig_E-set"/>
</dbReference>
<dbReference type="NCBIfam" id="TIGR01515">
    <property type="entry name" value="branching_enzym"/>
    <property type="match status" value="1"/>
</dbReference>
<dbReference type="NCBIfam" id="NF003811">
    <property type="entry name" value="PRK05402.1"/>
    <property type="match status" value="1"/>
</dbReference>
<dbReference type="NCBIfam" id="NF008967">
    <property type="entry name" value="PRK12313.1"/>
    <property type="match status" value="1"/>
</dbReference>
<dbReference type="PANTHER" id="PTHR43651">
    <property type="entry name" value="1,4-ALPHA-GLUCAN-BRANCHING ENZYME"/>
    <property type="match status" value="1"/>
</dbReference>
<dbReference type="PANTHER" id="PTHR43651:SF3">
    <property type="entry name" value="1,4-ALPHA-GLUCAN-BRANCHING ENZYME"/>
    <property type="match status" value="1"/>
</dbReference>
<dbReference type="Pfam" id="PF00128">
    <property type="entry name" value="Alpha-amylase"/>
    <property type="match status" value="2"/>
</dbReference>
<dbReference type="Pfam" id="PF02806">
    <property type="entry name" value="Alpha-amylase_C"/>
    <property type="match status" value="1"/>
</dbReference>
<dbReference type="Pfam" id="PF02922">
    <property type="entry name" value="CBM_48"/>
    <property type="match status" value="1"/>
</dbReference>
<dbReference type="Pfam" id="PF22019">
    <property type="entry name" value="GlgB_N"/>
    <property type="match status" value="1"/>
</dbReference>
<dbReference type="PIRSF" id="PIRSF000463">
    <property type="entry name" value="GlgB"/>
    <property type="match status" value="1"/>
</dbReference>
<dbReference type="SMART" id="SM00642">
    <property type="entry name" value="Aamy"/>
    <property type="match status" value="1"/>
</dbReference>
<dbReference type="SUPFAM" id="SSF51445">
    <property type="entry name" value="(Trans)glycosidases"/>
    <property type="match status" value="1"/>
</dbReference>
<dbReference type="SUPFAM" id="SSF81296">
    <property type="entry name" value="E set domains"/>
    <property type="match status" value="1"/>
</dbReference>
<dbReference type="SUPFAM" id="SSF51011">
    <property type="entry name" value="Glycosyl hydrolase domain"/>
    <property type="match status" value="1"/>
</dbReference>
<accession>Q0AGJ0</accession>
<gene>
    <name evidence="1" type="primary">glgB</name>
    <name type="ordered locus">Neut_1291</name>
</gene>
<feature type="chain" id="PRO_1000044987" description="1,4-alpha-glucan branching enzyme GlgB">
    <location>
        <begin position="1"/>
        <end position="732"/>
    </location>
</feature>
<feature type="active site" description="Nucleophile" evidence="1">
    <location>
        <position position="415"/>
    </location>
</feature>
<feature type="active site" description="Proton donor" evidence="1">
    <location>
        <position position="468"/>
    </location>
</feature>
<proteinExistence type="inferred from homology"/>
<evidence type="ECO:0000255" key="1">
    <source>
        <dbReference type="HAMAP-Rule" id="MF_00685"/>
    </source>
</evidence>
<protein>
    <recommendedName>
        <fullName evidence="1">1,4-alpha-glucan branching enzyme GlgB</fullName>
        <ecNumber evidence="1">2.4.1.18</ecNumber>
    </recommendedName>
    <alternativeName>
        <fullName evidence="1">1,4-alpha-D-glucan:1,4-alpha-D-glucan 6-glucosyl-transferase</fullName>
    </alternativeName>
    <alternativeName>
        <fullName evidence="1">Alpha-(1-&gt;4)-glucan branching enzyme</fullName>
    </alternativeName>
    <alternativeName>
        <fullName evidence="1">Glycogen branching enzyme</fullName>
        <shortName evidence="1">BE</shortName>
    </alternativeName>
</protein>
<sequence length="732" mass="84190">MKSLPFPSPSRDLAGDSAQSLLLAARLHAPGSYLGIHSVPGGELVRVFQPYMSRVWLQTSSGFQVMECTHDAGIFEWKGEAVTRPYLLRLEHAETGVIEERYDPYAFPVQISGHDLYLFNEGRLLQAYHMLGTHQVKNQGVTGTRFAVWAPNAERVSVVGDFNHWDGRVCPMMARDHSGVWELFIPDLPGGTLYKYEIRNHSTGEILLKTDPYATRYELRPNNAALTPVESRYEWQDNDWMVQRAGWDWLHAPVNIYELHVGSWKRHPDGSFYSYQELADHLIPYLQEMGYSHVELLPISEHPLDESWGYQVTGYFAATSRYGNPEAFMYFVDKCHQAGIGVILDWVPAHFPQDSFSLARFDGTALYEHEDPRLGYHQDWGTYIFNYGRSEVKSFLLSSAHYWLSVFHIDGLRVDAVASMLYLDYSRKEGEWLPNRFGGRENLDAIDFLRELNTMVHGEFSGALTFAEESTSWPAVSRPTYLGGLGFSMKWNMGWMNDTLNYMQLDPIHRHYHHNELTFNQLYAYTENFILPLSHDEVVHGKKSLLDKMSGDVWQMFANLRLLFTYQMTCPGKKINFMGNEFAQGREWRVNHELDWYLLERDPHRGIQMLLRNLNHLYLDTPALHELDFFTEGFSWIDCHDSEQSVISYQRRARDGSFMLVILNFTPVPRTGYRVGVPESRTYQEVFNSDSTYYGGSNIGNPGDIVPTGQQWSGQVDSIIITLPPLAGIILI</sequence>
<reference key="1">
    <citation type="journal article" date="2007" name="Environ. Microbiol.">
        <title>Whole-genome analysis of the ammonia-oxidizing bacterium, Nitrosomonas eutropha C91: implications for niche adaptation.</title>
        <authorList>
            <person name="Stein L.Y."/>
            <person name="Arp D.J."/>
            <person name="Berube P.M."/>
            <person name="Chain P.S."/>
            <person name="Hauser L."/>
            <person name="Jetten M.S."/>
            <person name="Klotz M.G."/>
            <person name="Larimer F.W."/>
            <person name="Norton J.M."/>
            <person name="Op den Camp H.J.M."/>
            <person name="Shin M."/>
            <person name="Wei X."/>
        </authorList>
    </citation>
    <scope>NUCLEOTIDE SEQUENCE [LARGE SCALE GENOMIC DNA]</scope>
    <source>
        <strain>DSM 101675 / C91 / Nm57</strain>
    </source>
</reference>
<organism>
    <name type="scientific">Nitrosomonas eutropha (strain DSM 101675 / C91 / Nm57)</name>
    <dbReference type="NCBI Taxonomy" id="335283"/>
    <lineage>
        <taxon>Bacteria</taxon>
        <taxon>Pseudomonadati</taxon>
        <taxon>Pseudomonadota</taxon>
        <taxon>Betaproteobacteria</taxon>
        <taxon>Nitrosomonadales</taxon>
        <taxon>Nitrosomonadaceae</taxon>
        <taxon>Nitrosomonas</taxon>
    </lineage>
</organism>
<keyword id="KW-0119">Carbohydrate metabolism</keyword>
<keyword id="KW-0320">Glycogen biosynthesis</keyword>
<keyword id="KW-0321">Glycogen metabolism</keyword>
<keyword id="KW-0328">Glycosyltransferase</keyword>
<keyword id="KW-0808">Transferase</keyword>